<organism>
    <name type="scientific">Psychromonas ingrahamii (strain DSM 17664 / CCUG 51855 / 37)</name>
    <dbReference type="NCBI Taxonomy" id="357804"/>
    <lineage>
        <taxon>Bacteria</taxon>
        <taxon>Pseudomonadati</taxon>
        <taxon>Pseudomonadota</taxon>
        <taxon>Gammaproteobacteria</taxon>
        <taxon>Alteromonadales</taxon>
        <taxon>Psychromonadaceae</taxon>
        <taxon>Psychromonas</taxon>
    </lineage>
</organism>
<name>PANC_PSYIN</name>
<reference key="1">
    <citation type="journal article" date="2008" name="BMC Genomics">
        <title>Genomics of an extreme psychrophile, Psychromonas ingrahamii.</title>
        <authorList>
            <person name="Riley M."/>
            <person name="Staley J.T."/>
            <person name="Danchin A."/>
            <person name="Wang T.Z."/>
            <person name="Brettin T.S."/>
            <person name="Hauser L.J."/>
            <person name="Land M.L."/>
            <person name="Thompson L.S."/>
        </authorList>
    </citation>
    <scope>NUCLEOTIDE SEQUENCE [LARGE SCALE GENOMIC DNA]</scope>
    <source>
        <strain>DSM 17664 / CCUG 51855 / 37</strain>
    </source>
</reference>
<dbReference type="EC" id="6.3.2.1" evidence="1"/>
<dbReference type="EMBL" id="CP000510">
    <property type="protein sequence ID" value="ABM02433.1"/>
    <property type="molecule type" value="Genomic_DNA"/>
</dbReference>
<dbReference type="RefSeq" id="WP_011768992.1">
    <property type="nucleotide sequence ID" value="NC_008709.1"/>
</dbReference>
<dbReference type="SMR" id="A1SSG8"/>
<dbReference type="STRING" id="357804.Ping_0579"/>
<dbReference type="KEGG" id="pin:Ping_0579"/>
<dbReference type="eggNOG" id="COG0414">
    <property type="taxonomic scope" value="Bacteria"/>
</dbReference>
<dbReference type="HOGENOM" id="CLU_047148_0_0_6"/>
<dbReference type="OrthoDB" id="9773087at2"/>
<dbReference type="UniPathway" id="UPA00028">
    <property type="reaction ID" value="UER00005"/>
</dbReference>
<dbReference type="Proteomes" id="UP000000639">
    <property type="component" value="Chromosome"/>
</dbReference>
<dbReference type="GO" id="GO:0005829">
    <property type="term" value="C:cytosol"/>
    <property type="evidence" value="ECO:0007669"/>
    <property type="project" value="TreeGrafter"/>
</dbReference>
<dbReference type="GO" id="GO:0005524">
    <property type="term" value="F:ATP binding"/>
    <property type="evidence" value="ECO:0007669"/>
    <property type="project" value="UniProtKB-KW"/>
</dbReference>
<dbReference type="GO" id="GO:0004592">
    <property type="term" value="F:pantoate-beta-alanine ligase activity"/>
    <property type="evidence" value="ECO:0007669"/>
    <property type="project" value="UniProtKB-UniRule"/>
</dbReference>
<dbReference type="GO" id="GO:0015940">
    <property type="term" value="P:pantothenate biosynthetic process"/>
    <property type="evidence" value="ECO:0007669"/>
    <property type="project" value="UniProtKB-UniRule"/>
</dbReference>
<dbReference type="CDD" id="cd00560">
    <property type="entry name" value="PanC"/>
    <property type="match status" value="1"/>
</dbReference>
<dbReference type="FunFam" id="3.40.50.620:FF:000013">
    <property type="entry name" value="Pantothenate synthetase"/>
    <property type="match status" value="1"/>
</dbReference>
<dbReference type="Gene3D" id="3.40.50.620">
    <property type="entry name" value="HUPs"/>
    <property type="match status" value="1"/>
</dbReference>
<dbReference type="Gene3D" id="3.30.1300.10">
    <property type="entry name" value="Pantoate-beta-alanine ligase, C-terminal domain"/>
    <property type="match status" value="1"/>
</dbReference>
<dbReference type="HAMAP" id="MF_00158">
    <property type="entry name" value="PanC"/>
    <property type="match status" value="1"/>
</dbReference>
<dbReference type="InterPro" id="IPR003721">
    <property type="entry name" value="Pantoate_ligase"/>
</dbReference>
<dbReference type="InterPro" id="IPR042176">
    <property type="entry name" value="Pantoate_ligase_C"/>
</dbReference>
<dbReference type="InterPro" id="IPR014729">
    <property type="entry name" value="Rossmann-like_a/b/a_fold"/>
</dbReference>
<dbReference type="NCBIfam" id="TIGR00018">
    <property type="entry name" value="panC"/>
    <property type="match status" value="1"/>
</dbReference>
<dbReference type="PANTHER" id="PTHR21299">
    <property type="entry name" value="CYTIDYLATE KINASE/PANTOATE-BETA-ALANINE LIGASE"/>
    <property type="match status" value="1"/>
</dbReference>
<dbReference type="PANTHER" id="PTHR21299:SF1">
    <property type="entry name" value="PANTOATE--BETA-ALANINE LIGASE"/>
    <property type="match status" value="1"/>
</dbReference>
<dbReference type="Pfam" id="PF02569">
    <property type="entry name" value="Pantoate_ligase"/>
    <property type="match status" value="1"/>
</dbReference>
<dbReference type="SUPFAM" id="SSF52374">
    <property type="entry name" value="Nucleotidylyl transferase"/>
    <property type="match status" value="1"/>
</dbReference>
<feature type="chain" id="PRO_0000305521" description="Pantothenate synthetase">
    <location>
        <begin position="1"/>
        <end position="289"/>
    </location>
</feature>
<feature type="active site" description="Proton donor" evidence="1">
    <location>
        <position position="37"/>
    </location>
</feature>
<feature type="binding site" evidence="1">
    <location>
        <begin position="30"/>
        <end position="37"/>
    </location>
    <ligand>
        <name>ATP</name>
        <dbReference type="ChEBI" id="CHEBI:30616"/>
    </ligand>
</feature>
<feature type="binding site" evidence="1">
    <location>
        <position position="61"/>
    </location>
    <ligand>
        <name>(R)-pantoate</name>
        <dbReference type="ChEBI" id="CHEBI:15980"/>
    </ligand>
</feature>
<feature type="binding site" evidence="1">
    <location>
        <position position="61"/>
    </location>
    <ligand>
        <name>beta-alanine</name>
        <dbReference type="ChEBI" id="CHEBI:57966"/>
    </ligand>
</feature>
<feature type="binding site" evidence="1">
    <location>
        <begin position="149"/>
        <end position="152"/>
    </location>
    <ligand>
        <name>ATP</name>
        <dbReference type="ChEBI" id="CHEBI:30616"/>
    </ligand>
</feature>
<feature type="binding site" evidence="1">
    <location>
        <position position="155"/>
    </location>
    <ligand>
        <name>(R)-pantoate</name>
        <dbReference type="ChEBI" id="CHEBI:15980"/>
    </ligand>
</feature>
<feature type="binding site" evidence="1">
    <location>
        <begin position="186"/>
        <end position="189"/>
    </location>
    <ligand>
        <name>ATP</name>
        <dbReference type="ChEBI" id="CHEBI:30616"/>
    </ligand>
</feature>
<evidence type="ECO:0000255" key="1">
    <source>
        <dbReference type="HAMAP-Rule" id="MF_00158"/>
    </source>
</evidence>
<proteinExistence type="inferred from homology"/>
<protein>
    <recommendedName>
        <fullName evidence="1">Pantothenate synthetase</fullName>
        <shortName evidence="1">PS</shortName>
        <ecNumber evidence="1">6.3.2.1</ecNumber>
    </recommendedName>
    <alternativeName>
        <fullName evidence="1">Pantoate--beta-alanine ligase</fullName>
    </alternativeName>
    <alternativeName>
        <fullName evidence="1">Pantoate-activating enzyme</fullName>
    </alternativeName>
</protein>
<sequence length="289" mass="31603">MLIIDNPQQLREKIKQLKQQGSEIAFVPTMGNLHEGHLTLVQAGQKKAAVVIVSIFINPMQFNNAQDLLNYPKTMAQDCEKLAAAGVNIIFTPAASSIYPNGLNAQTYVEVPLLSNCLEGELRPGHFRGMSTIVNKLFNLVQPDYACFGEKDFQQLAIVKQMVSDLGMPIEIIPVATMREKNGLAMSSRNGKLSSLEKQKAPLLAKVMNQLAVDVQAQKTELSILIDDASIILNNAGFNTDAIHIVDAQTLQAVNCHSKEAVILMAAFLGETRLIDNKVVILNHSATKI</sequence>
<keyword id="KW-0067">ATP-binding</keyword>
<keyword id="KW-0963">Cytoplasm</keyword>
<keyword id="KW-0436">Ligase</keyword>
<keyword id="KW-0547">Nucleotide-binding</keyword>
<keyword id="KW-0566">Pantothenate biosynthesis</keyword>
<keyword id="KW-1185">Reference proteome</keyword>
<accession>A1SSG8</accession>
<gene>
    <name evidence="1" type="primary">panC</name>
    <name type="ordered locus">Ping_0579</name>
</gene>
<comment type="function">
    <text evidence="1">Catalyzes the condensation of pantoate with beta-alanine in an ATP-dependent reaction via a pantoyl-adenylate intermediate.</text>
</comment>
<comment type="catalytic activity">
    <reaction evidence="1">
        <text>(R)-pantoate + beta-alanine + ATP = (R)-pantothenate + AMP + diphosphate + H(+)</text>
        <dbReference type="Rhea" id="RHEA:10912"/>
        <dbReference type="ChEBI" id="CHEBI:15378"/>
        <dbReference type="ChEBI" id="CHEBI:15980"/>
        <dbReference type="ChEBI" id="CHEBI:29032"/>
        <dbReference type="ChEBI" id="CHEBI:30616"/>
        <dbReference type="ChEBI" id="CHEBI:33019"/>
        <dbReference type="ChEBI" id="CHEBI:57966"/>
        <dbReference type="ChEBI" id="CHEBI:456215"/>
        <dbReference type="EC" id="6.3.2.1"/>
    </reaction>
</comment>
<comment type="pathway">
    <text evidence="1">Cofactor biosynthesis; (R)-pantothenate biosynthesis; (R)-pantothenate from (R)-pantoate and beta-alanine: step 1/1.</text>
</comment>
<comment type="subunit">
    <text evidence="1">Homodimer.</text>
</comment>
<comment type="subcellular location">
    <subcellularLocation>
        <location evidence="1">Cytoplasm</location>
    </subcellularLocation>
</comment>
<comment type="miscellaneous">
    <text evidence="1">The reaction proceeds by a bi uni uni bi ping pong mechanism.</text>
</comment>
<comment type="similarity">
    <text evidence="1">Belongs to the pantothenate synthetase family.</text>
</comment>